<organism>
    <name type="scientific">Rhodopseudomonas palustris (strain ATCC BAA-98 / CGA009)</name>
    <dbReference type="NCBI Taxonomy" id="258594"/>
    <lineage>
        <taxon>Bacteria</taxon>
        <taxon>Pseudomonadati</taxon>
        <taxon>Pseudomonadota</taxon>
        <taxon>Alphaproteobacteria</taxon>
        <taxon>Hyphomicrobiales</taxon>
        <taxon>Nitrobacteraceae</taxon>
        <taxon>Rhodopseudomonas</taxon>
    </lineage>
</organism>
<accession>Q6N8N2</accession>
<evidence type="ECO:0000250" key="1"/>
<evidence type="ECO:0000269" key="2">
    <source>
    </source>
</evidence>
<evidence type="ECO:0000269" key="3">
    <source>
    </source>
</evidence>
<evidence type="ECO:0000269" key="4">
    <source>
    </source>
</evidence>
<evidence type="ECO:0000303" key="5">
    <source>
    </source>
</evidence>
<evidence type="ECO:0000303" key="6">
    <source>
    </source>
</evidence>
<evidence type="ECO:0000303" key="7">
    <source>
    </source>
</evidence>
<evidence type="ECO:0000305" key="8"/>
<evidence type="ECO:0000312" key="9">
    <source>
        <dbReference type="EMBL" id="CAE27312.1"/>
    </source>
</evidence>
<evidence type="ECO:0007829" key="10">
    <source>
        <dbReference type="PDB" id="4DNJ"/>
    </source>
</evidence>
<gene>
    <name evidence="5" type="primary">cyp199a2</name>
    <name evidence="9" type="ordered locus">RPA1871</name>
</gene>
<reference key="1">
    <citation type="journal article" date="2004" name="Nat. Biotechnol.">
        <title>Complete genome sequence of the metabolically versatile photosynthetic bacterium Rhodopseudomonas palustris.</title>
        <authorList>
            <person name="Larimer F.W."/>
            <person name="Chain P."/>
            <person name="Hauser L."/>
            <person name="Lamerdin J.E."/>
            <person name="Malfatti S."/>
            <person name="Do L."/>
            <person name="Land M.L."/>
            <person name="Pelletier D.A."/>
            <person name="Beatty J.T."/>
            <person name="Lang A.S."/>
            <person name="Tabita F.R."/>
            <person name="Gibson J.L."/>
            <person name="Hanson T.E."/>
            <person name="Bobst C."/>
            <person name="Torres y Torres J.L."/>
            <person name="Peres C."/>
            <person name="Harrison F.H."/>
            <person name="Gibson J."/>
            <person name="Harwood C.S."/>
        </authorList>
    </citation>
    <scope>NUCLEOTIDE SEQUENCE [LARGE SCALE GENOMIC DNA]</scope>
    <source>
        <strain>ATCC BAA-98 / CGA009</strain>
    </source>
</reference>
<reference key="2">
    <citation type="journal article" date="2006" name="Biochem. Biophys. Res. Commun.">
        <title>Cytochrome P450 enzymes from the metabolically diverse bacterium Rhodopseudomonas palustris.</title>
        <authorList>
            <person name="Bell S.G."/>
            <person name="Hoskins N."/>
            <person name="Xu F."/>
            <person name="Caprotti D."/>
            <person name="Rao Z."/>
            <person name="Wong L.L."/>
        </authorList>
    </citation>
    <scope>FUNCTION</scope>
    <scope>CATALYTIC ACTIVITY</scope>
    <scope>SUBUNIT</scope>
    <scope>COFACTOR</scope>
    <source>
        <strain evidence="5">ATCC BAA-98 / CGA009</strain>
    </source>
</reference>
<reference key="3">
    <citation type="journal article" date="2008" name="J. Mol. Biol.">
        <title>Crystal structure of CYP199A2, a para-substituted benzoic acid oxidizing cytochrome P450 from Rhodopseudomonas palustris.</title>
        <authorList>
            <person name="Bell S.G."/>
            <person name="Xu F."/>
            <person name="Forward I."/>
            <person name="Bartlam M."/>
            <person name="Rao Z."/>
            <person name="Wong L.L."/>
        </authorList>
    </citation>
    <scope>X-RAY CRYSTALLOGRAPHY (2.01 ANGSTROMS) IN COMPLEX WITH HEME</scope>
    <scope>FUNCTION</scope>
    <scope>CATALYTIC ACTIVITY</scope>
    <scope>COFACTOR</scope>
    <source>
        <strain evidence="6">ATCC BAA-98 / CGA009</strain>
    </source>
</reference>
<reference key="4">
    <citation type="journal article" date="2012" name="Dalton Trans.">
        <title>The crystal structures of 4-methoxybenzoate bound CYP199A2 and CYP199A4: structural changes on substrate binding and the identification of an anion binding site.</title>
        <authorList>
            <person name="Bell S.G."/>
            <person name="Yang W."/>
            <person name="Tan A.B."/>
            <person name="Zhou R."/>
            <person name="Johnson E.O."/>
            <person name="Zhang A."/>
            <person name="Zhou W."/>
            <person name="Rao Z."/>
            <person name="Wong L.L."/>
        </authorList>
    </citation>
    <scope>X-RAY CRYSTALLOGRAPHY (1.80 ANGSTROMS) IN COMPLEX WITH HEME AND 4-METHOXYBENZOATE</scope>
    <scope>COFACTOR</scope>
    <source>
        <strain evidence="7">ATCC BAA-98 / CGA009</strain>
    </source>
</reference>
<protein>
    <recommendedName>
        <fullName evidence="5">Cytochrome p450 CYP199A2</fullName>
        <ecNumber evidence="2 3">1.14.99.15</ecNumber>
    </recommendedName>
    <alternativeName>
        <fullName evidence="8">4-methoxybenzoate O-demethylase CYP199A2</fullName>
    </alternativeName>
    <alternativeName>
        <fullName evidence="8">4-methoxybenzoate monooxygenase (O-demethylating)</fullName>
    </alternativeName>
</protein>
<proteinExistence type="evidence at protein level"/>
<sequence length="412" mass="44623">MTTAPSLVPVTTPSQHGAGVPHLGIDPFALDYFADPYPEQETLREAGPVVYLDKWNVYGVARYAEVYAVLNDPLTFCSSRGVGLSDFKKEKPWRPPSLILEADPPAHTRTRAVLSKVLSPATMKRLRDGFAAAADAKIDELLARGGNIDAIADLAEAYPLSVFPDAMGLKQEGRENLLPYAGLVFNAFGPPNELRQSAIERSAPHQAYVAEQCQRPNLAPGGFGACIHAFSDTGEITPEEAPLLVRSLLSAGLDTTVNGIAAAVYCLARFPDEFARLRADPSLARNAFEEAVRFESPVQTFFRTTTRDVELAGATIGEGEKVLMFLGSANRDPRRWDDPDRYDITRKTSGHVGFGSGVHMCVGQLVARLEGEVVLAALARKVAAIEIAGPLKRRFNNTLRGLESLPIQLTPA</sequence>
<name>CYPA2_RHOPA</name>
<dbReference type="EC" id="1.14.99.15" evidence="2 3"/>
<dbReference type="EMBL" id="BX572599">
    <property type="protein sequence ID" value="CAE27312.1"/>
    <property type="molecule type" value="Genomic_DNA"/>
</dbReference>
<dbReference type="RefSeq" id="WP_011157377.1">
    <property type="nucleotide sequence ID" value="NZ_CP116810.1"/>
</dbReference>
<dbReference type="PDB" id="2FR7">
    <property type="method" value="X-ray"/>
    <property type="resolution" value="2.01 A"/>
    <property type="chains" value="A=1-412"/>
</dbReference>
<dbReference type="PDB" id="4DNJ">
    <property type="method" value="X-ray"/>
    <property type="resolution" value="1.80 A"/>
    <property type="chains" value="A=1-412"/>
</dbReference>
<dbReference type="PDBsum" id="2FR7"/>
<dbReference type="PDBsum" id="4DNJ"/>
<dbReference type="SMR" id="Q6N8N2"/>
<dbReference type="STRING" id="258594.RPA1871"/>
<dbReference type="GeneID" id="66892909"/>
<dbReference type="eggNOG" id="COG2124">
    <property type="taxonomic scope" value="Bacteria"/>
</dbReference>
<dbReference type="HOGENOM" id="CLU_033716_0_2_5"/>
<dbReference type="PhylomeDB" id="Q6N8N2"/>
<dbReference type="BRENDA" id="1.14.99.15">
    <property type="organism ID" value="5412"/>
</dbReference>
<dbReference type="EvolutionaryTrace" id="Q6N8N2"/>
<dbReference type="GO" id="GO:0005737">
    <property type="term" value="C:cytoplasm"/>
    <property type="evidence" value="ECO:0007669"/>
    <property type="project" value="UniProtKB-SubCell"/>
</dbReference>
<dbReference type="GO" id="GO:0018690">
    <property type="term" value="F:4-methoxybenzoate monooxygenase (O-demethylating) activity"/>
    <property type="evidence" value="ECO:0000314"/>
    <property type="project" value="UniProtKB"/>
</dbReference>
<dbReference type="GO" id="GO:0020037">
    <property type="term" value="F:heme binding"/>
    <property type="evidence" value="ECO:0000314"/>
    <property type="project" value="UniProtKB"/>
</dbReference>
<dbReference type="GO" id="GO:0005506">
    <property type="term" value="F:iron ion binding"/>
    <property type="evidence" value="ECO:0000314"/>
    <property type="project" value="UniProtKB"/>
</dbReference>
<dbReference type="GO" id="GO:0006805">
    <property type="term" value="P:xenobiotic metabolic process"/>
    <property type="evidence" value="ECO:0000314"/>
    <property type="project" value="UniProtKB"/>
</dbReference>
<dbReference type="CDD" id="cd11037">
    <property type="entry name" value="CYP199A2-like"/>
    <property type="match status" value="1"/>
</dbReference>
<dbReference type="Gene3D" id="1.10.630.10">
    <property type="entry name" value="Cytochrome P450"/>
    <property type="match status" value="1"/>
</dbReference>
<dbReference type="InterPro" id="IPR001128">
    <property type="entry name" value="Cyt_P450"/>
</dbReference>
<dbReference type="InterPro" id="IPR017972">
    <property type="entry name" value="Cyt_P450_CS"/>
</dbReference>
<dbReference type="InterPro" id="IPR036396">
    <property type="entry name" value="Cyt_P450_sf"/>
</dbReference>
<dbReference type="PANTHER" id="PTHR46696:SF1">
    <property type="entry name" value="CYTOCHROME P450 YJIB-RELATED"/>
    <property type="match status" value="1"/>
</dbReference>
<dbReference type="PANTHER" id="PTHR46696">
    <property type="entry name" value="P450, PUTATIVE (EUROFUNG)-RELATED"/>
    <property type="match status" value="1"/>
</dbReference>
<dbReference type="Pfam" id="PF00067">
    <property type="entry name" value="p450"/>
    <property type="match status" value="1"/>
</dbReference>
<dbReference type="SUPFAM" id="SSF48264">
    <property type="entry name" value="Cytochrome P450"/>
    <property type="match status" value="1"/>
</dbReference>
<dbReference type="PROSITE" id="PS00086">
    <property type="entry name" value="CYTOCHROME_P450"/>
    <property type="match status" value="1"/>
</dbReference>
<keyword id="KW-0002">3D-structure</keyword>
<keyword id="KW-0963">Cytoplasm</keyword>
<keyword id="KW-0349">Heme</keyword>
<keyword id="KW-0408">Iron</keyword>
<keyword id="KW-0479">Metal-binding</keyword>
<keyword id="KW-0503">Monooxygenase</keyword>
<keyword id="KW-0560">Oxidoreductase</keyword>
<feature type="chain" id="PRO_0000430673" description="Cytochrome p450 CYP199A2">
    <location>
        <begin position="1"/>
        <end position="412"/>
    </location>
</feature>
<feature type="binding site" evidence="4">
    <location>
        <begin position="94"/>
        <end position="97"/>
    </location>
    <ligand>
        <name>substrate</name>
    </ligand>
</feature>
<feature type="binding site" evidence="4">
    <location>
        <position position="247"/>
    </location>
    <ligand>
        <name>substrate</name>
    </ligand>
</feature>
<feature type="binding site" description="axial binding residue" evidence="3 4">
    <location>
        <position position="361"/>
    </location>
    <ligand>
        <name>heme</name>
        <dbReference type="ChEBI" id="CHEBI:30413"/>
    </ligand>
    <ligandPart>
        <name>Fe</name>
        <dbReference type="ChEBI" id="CHEBI:18248"/>
    </ligandPart>
</feature>
<feature type="helix" evidence="10">
    <location>
        <begin position="30"/>
        <end position="34"/>
    </location>
</feature>
<feature type="helix" evidence="10">
    <location>
        <begin position="37"/>
        <end position="46"/>
    </location>
</feature>
<feature type="strand" evidence="10">
    <location>
        <begin position="48"/>
        <end position="52"/>
    </location>
</feature>
<feature type="turn" evidence="10">
    <location>
        <begin position="53"/>
        <end position="56"/>
    </location>
</feature>
<feature type="strand" evidence="10">
    <location>
        <begin position="57"/>
        <end position="60"/>
    </location>
</feature>
<feature type="helix" evidence="10">
    <location>
        <begin position="63"/>
        <end position="70"/>
    </location>
</feature>
<feature type="turn" evidence="10">
    <location>
        <begin position="73"/>
        <end position="75"/>
    </location>
</feature>
<feature type="strand" evidence="10">
    <location>
        <begin position="76"/>
        <end position="78"/>
    </location>
</feature>
<feature type="strand" evidence="10">
    <location>
        <begin position="82"/>
        <end position="85"/>
    </location>
</feature>
<feature type="turn" evidence="10">
    <location>
        <begin position="87"/>
        <end position="89"/>
    </location>
</feature>
<feature type="turn" evidence="10">
    <location>
        <begin position="98"/>
        <end position="101"/>
    </location>
</feature>
<feature type="helix" evidence="10">
    <location>
        <begin position="106"/>
        <end position="117"/>
    </location>
</feature>
<feature type="helix" evidence="10">
    <location>
        <begin position="120"/>
        <end position="143"/>
    </location>
</feature>
<feature type="strand" evidence="10">
    <location>
        <begin position="146"/>
        <end position="149"/>
    </location>
</feature>
<feature type="helix" evidence="10">
    <location>
        <begin position="151"/>
        <end position="156"/>
    </location>
</feature>
<feature type="helix" evidence="10">
    <location>
        <begin position="157"/>
        <end position="167"/>
    </location>
</feature>
<feature type="helix" evidence="10">
    <location>
        <begin position="174"/>
        <end position="176"/>
    </location>
</feature>
<feature type="helix" evidence="10">
    <location>
        <begin position="177"/>
        <end position="187"/>
    </location>
</feature>
<feature type="helix" evidence="10">
    <location>
        <begin position="193"/>
        <end position="200"/>
    </location>
</feature>
<feature type="helix" evidence="10">
    <location>
        <begin position="203"/>
        <end position="212"/>
    </location>
</feature>
<feature type="helix" evidence="10">
    <location>
        <begin position="215"/>
        <end position="217"/>
    </location>
</feature>
<feature type="helix" evidence="10">
    <location>
        <begin position="223"/>
        <end position="229"/>
    </location>
</feature>
<feature type="turn" evidence="10">
    <location>
        <begin position="230"/>
        <end position="234"/>
    </location>
</feature>
<feature type="helix" evidence="10">
    <location>
        <begin position="240"/>
        <end position="251"/>
    </location>
</feature>
<feature type="helix" evidence="10">
    <location>
        <begin position="254"/>
        <end position="269"/>
    </location>
</feature>
<feature type="helix" evidence="10">
    <location>
        <begin position="271"/>
        <end position="279"/>
    </location>
</feature>
<feature type="helix" evidence="10">
    <location>
        <begin position="281"/>
        <end position="283"/>
    </location>
</feature>
<feature type="helix" evidence="10">
    <location>
        <begin position="284"/>
        <end position="295"/>
    </location>
</feature>
<feature type="strand" evidence="10">
    <location>
        <begin position="300"/>
        <end position="307"/>
    </location>
</feature>
<feature type="strand" evidence="10">
    <location>
        <begin position="309"/>
        <end position="311"/>
    </location>
</feature>
<feature type="strand" evidence="10">
    <location>
        <begin position="314"/>
        <end position="316"/>
    </location>
</feature>
<feature type="strand" evidence="10">
    <location>
        <begin position="321"/>
        <end position="325"/>
    </location>
</feature>
<feature type="helix" evidence="10">
    <location>
        <begin position="326"/>
        <end position="329"/>
    </location>
</feature>
<feature type="turn" evidence="10">
    <location>
        <begin position="333"/>
        <end position="335"/>
    </location>
</feature>
<feature type="strand" evidence="10">
    <location>
        <begin position="336"/>
        <end position="338"/>
    </location>
</feature>
<feature type="helix" evidence="10">
    <location>
        <begin position="364"/>
        <end position="381"/>
    </location>
</feature>
<feature type="strand" evidence="10">
    <location>
        <begin position="382"/>
        <end position="387"/>
    </location>
</feature>
<feature type="strand" evidence="10">
    <location>
        <begin position="392"/>
        <end position="395"/>
    </location>
</feature>
<feature type="strand" evidence="10">
    <location>
        <begin position="397"/>
        <end position="404"/>
    </location>
</feature>
<feature type="strand" evidence="10">
    <location>
        <begin position="406"/>
        <end position="411"/>
    </location>
</feature>
<comment type="function">
    <text evidence="2 3">The oxidative demethylation of 4-methoxybenzoate requires the participation of the monooxygenase CYP199A2, the ferredoxin-like protein ThcC/RPA1872 and a ferredoxin reductase to mediate the transfer of electrons from NADH to CYP199A2. It is also active with 4-ethylbenzoate.</text>
</comment>
<comment type="catalytic activity">
    <reaction evidence="2 3">
        <text>4-methoxybenzoate + AH2 + O2 = 4-hydroxybenzoate + formaldehyde + A + H2O</text>
        <dbReference type="Rhea" id="RHEA:18613"/>
        <dbReference type="ChEBI" id="CHEBI:13193"/>
        <dbReference type="ChEBI" id="CHEBI:15377"/>
        <dbReference type="ChEBI" id="CHEBI:15379"/>
        <dbReference type="ChEBI" id="CHEBI:16639"/>
        <dbReference type="ChEBI" id="CHEBI:16842"/>
        <dbReference type="ChEBI" id="CHEBI:17499"/>
        <dbReference type="ChEBI" id="CHEBI:17879"/>
        <dbReference type="EC" id="1.14.99.15"/>
    </reaction>
</comment>
<comment type="cofactor">
    <cofactor evidence="2 3 4">
        <name>heme</name>
        <dbReference type="ChEBI" id="CHEBI:30413"/>
    </cofactor>
</comment>
<comment type="subunit">
    <text evidence="5">Interacts with the ferredoxin-like iron-sulfur protein ThcC.</text>
</comment>
<comment type="subcellular location">
    <subcellularLocation>
        <location evidence="1">Cytoplasm</location>
    </subcellularLocation>
</comment>
<comment type="similarity">
    <text>Belongs to the cytochrome P450 family.</text>
</comment>